<keyword id="KW-0029">Amino-acid transport</keyword>
<keyword id="KW-1003">Cell membrane</keyword>
<keyword id="KW-0472">Membrane</keyword>
<keyword id="KW-0769">Symport</keyword>
<keyword id="KW-0812">Transmembrane</keyword>
<keyword id="KW-1133">Transmembrane helix</keyword>
<keyword id="KW-0813">Transport</keyword>
<dbReference type="EMBL" id="CP000259">
    <property type="protein sequence ID" value="ABF31462.1"/>
    <property type="molecule type" value="Genomic_DNA"/>
</dbReference>
<dbReference type="RefSeq" id="WP_002991067.1">
    <property type="nucleotide sequence ID" value="NC_008021.1"/>
</dbReference>
<dbReference type="SMR" id="Q1JND7"/>
<dbReference type="KEGG" id="spk:MGAS9429_Spy0274"/>
<dbReference type="HOGENOM" id="CLU_044581_0_0_9"/>
<dbReference type="Proteomes" id="UP000002433">
    <property type="component" value="Chromosome"/>
</dbReference>
<dbReference type="GO" id="GO:0005886">
    <property type="term" value="C:plasma membrane"/>
    <property type="evidence" value="ECO:0007669"/>
    <property type="project" value="UniProtKB-SubCell"/>
</dbReference>
<dbReference type="GO" id="GO:0015171">
    <property type="term" value="F:amino acid transmembrane transporter activity"/>
    <property type="evidence" value="ECO:0007669"/>
    <property type="project" value="UniProtKB-UniRule"/>
</dbReference>
<dbReference type="GO" id="GO:0015293">
    <property type="term" value="F:symporter activity"/>
    <property type="evidence" value="ECO:0007669"/>
    <property type="project" value="UniProtKB-UniRule"/>
</dbReference>
<dbReference type="GO" id="GO:0032329">
    <property type="term" value="P:serine transport"/>
    <property type="evidence" value="ECO:0007669"/>
    <property type="project" value="InterPro"/>
</dbReference>
<dbReference type="GO" id="GO:0015826">
    <property type="term" value="P:threonine transport"/>
    <property type="evidence" value="ECO:0007669"/>
    <property type="project" value="InterPro"/>
</dbReference>
<dbReference type="FunFam" id="1.10.3860.10:FF:000003">
    <property type="entry name" value="Serine/threonine transporter sstT"/>
    <property type="match status" value="1"/>
</dbReference>
<dbReference type="Gene3D" id="1.10.3860.10">
    <property type="entry name" value="Sodium:dicarboxylate symporter"/>
    <property type="match status" value="1"/>
</dbReference>
<dbReference type="HAMAP" id="MF_01582">
    <property type="entry name" value="Ser_Thr_transp_SstT"/>
    <property type="match status" value="1"/>
</dbReference>
<dbReference type="InterPro" id="IPR001991">
    <property type="entry name" value="Na-dicarboxylate_symporter"/>
</dbReference>
<dbReference type="InterPro" id="IPR036458">
    <property type="entry name" value="Na:dicarbo_symporter_sf"/>
</dbReference>
<dbReference type="InterPro" id="IPR023025">
    <property type="entry name" value="Ser_Thr_transp_SstT"/>
</dbReference>
<dbReference type="NCBIfam" id="NF010151">
    <property type="entry name" value="PRK13628.1"/>
    <property type="match status" value="1"/>
</dbReference>
<dbReference type="PANTHER" id="PTHR42865">
    <property type="entry name" value="PROTON/GLUTAMATE-ASPARTATE SYMPORTER"/>
    <property type="match status" value="1"/>
</dbReference>
<dbReference type="PANTHER" id="PTHR42865:SF7">
    <property type="entry name" value="PROTON_GLUTAMATE-ASPARTATE SYMPORTER"/>
    <property type="match status" value="1"/>
</dbReference>
<dbReference type="Pfam" id="PF00375">
    <property type="entry name" value="SDF"/>
    <property type="match status" value="1"/>
</dbReference>
<dbReference type="PRINTS" id="PR00173">
    <property type="entry name" value="EDTRNSPORT"/>
</dbReference>
<dbReference type="SUPFAM" id="SSF118215">
    <property type="entry name" value="Proton glutamate symport protein"/>
    <property type="match status" value="1"/>
</dbReference>
<feature type="chain" id="PRO_0000309139" description="Serine/threonine transporter SstT">
    <location>
        <begin position="1"/>
        <end position="404"/>
    </location>
</feature>
<feature type="transmembrane region" description="Helical" evidence="1">
    <location>
        <begin position="17"/>
        <end position="37"/>
    </location>
</feature>
<feature type="transmembrane region" description="Helical" evidence="1">
    <location>
        <begin position="39"/>
        <end position="59"/>
    </location>
</feature>
<feature type="transmembrane region" description="Helical" evidence="1">
    <location>
        <begin position="75"/>
        <end position="95"/>
    </location>
</feature>
<feature type="transmembrane region" description="Helical" evidence="1">
    <location>
        <begin position="138"/>
        <end position="158"/>
    </location>
</feature>
<feature type="transmembrane region" description="Helical" evidence="1">
    <location>
        <begin position="179"/>
        <end position="199"/>
    </location>
</feature>
<feature type="transmembrane region" description="Helical" evidence="1">
    <location>
        <begin position="212"/>
        <end position="232"/>
    </location>
</feature>
<feature type="transmembrane region" description="Helical" evidence="1">
    <location>
        <begin position="287"/>
        <end position="307"/>
    </location>
</feature>
<feature type="transmembrane region" description="Helical" evidence="1">
    <location>
        <begin position="313"/>
        <end position="333"/>
    </location>
</feature>
<accession>Q1JND7</accession>
<comment type="function">
    <text evidence="1">Involved in the import of serine and threonine into the cell, with the concomitant import of sodium (symport system).</text>
</comment>
<comment type="catalytic activity">
    <reaction evidence="1">
        <text>L-serine(in) + Na(+)(in) = L-serine(out) + Na(+)(out)</text>
        <dbReference type="Rhea" id="RHEA:29575"/>
        <dbReference type="ChEBI" id="CHEBI:29101"/>
        <dbReference type="ChEBI" id="CHEBI:33384"/>
    </reaction>
    <physiologicalReaction direction="right-to-left" evidence="1">
        <dbReference type="Rhea" id="RHEA:29577"/>
    </physiologicalReaction>
</comment>
<comment type="catalytic activity">
    <reaction evidence="1">
        <text>L-threonine(in) + Na(+)(in) = L-threonine(out) + Na(+)(out)</text>
        <dbReference type="Rhea" id="RHEA:69999"/>
        <dbReference type="ChEBI" id="CHEBI:29101"/>
        <dbReference type="ChEBI" id="CHEBI:57926"/>
    </reaction>
    <physiologicalReaction direction="right-to-left" evidence="1">
        <dbReference type="Rhea" id="RHEA:70001"/>
    </physiologicalReaction>
</comment>
<comment type="subcellular location">
    <subcellularLocation>
        <location evidence="1">Cell membrane</location>
        <topology evidence="1">Multi-pass membrane protein</topology>
    </subcellularLocation>
</comment>
<comment type="similarity">
    <text evidence="1">Belongs to the dicarboxylate/amino acid:cation symporter (DAACS) (TC 2.A.23) family.</text>
</comment>
<name>SSTT_STRPC</name>
<proteinExistence type="inferred from homology"/>
<reference key="1">
    <citation type="journal article" date="2006" name="Proc. Natl. Acad. Sci. U.S.A.">
        <title>Molecular genetic anatomy of inter- and intraserotype variation in the human bacterial pathogen group A Streptococcus.</title>
        <authorList>
            <person name="Beres S.B."/>
            <person name="Richter E.W."/>
            <person name="Nagiec M.J."/>
            <person name="Sumby P."/>
            <person name="Porcella S.F."/>
            <person name="DeLeo F.R."/>
            <person name="Musser J.M."/>
        </authorList>
    </citation>
    <scope>NUCLEOTIDE SEQUENCE [LARGE SCALE GENOMIC DNA]</scope>
    <source>
        <strain>MGAS9429</strain>
    </source>
</reference>
<sequence>MKKIYDLWVRVSLIKKIGIGVVIGVMLGILAPDLTGFSILGKLFVGGLKAIAPLLVFALVSQAISHQKKGKQTNMTLIIVLYLFGTFASALVAVLTAYLFPLTLVLNTPVNTELSPPQGVAEVFQSLLLKLVDNPINALATANYIGVLSWAIIFGLALKAASQETKHLIKTAAEVTSQIVVWIINLAPIGIMSLVFTTISENGVGILSDYAFLILVLVGTMVFVALVVNPLIAVLITRQNPYPLVLRCLRESGLTAFFTRSSAANIPVNMQLCQKIGLSKDTYSVSIPLGATINMGGAAITINVLTLAAVHTFGIPIDFLTALLLSVVAAVSACGASGVAGGSLLLIPVACSLFGISNDLAMQVVGVGFIVGVIQDSCETALNSSTDVLFTAIAENAFWKRKKA</sequence>
<organism>
    <name type="scientific">Streptococcus pyogenes serotype M12 (strain MGAS9429)</name>
    <dbReference type="NCBI Taxonomy" id="370551"/>
    <lineage>
        <taxon>Bacteria</taxon>
        <taxon>Bacillati</taxon>
        <taxon>Bacillota</taxon>
        <taxon>Bacilli</taxon>
        <taxon>Lactobacillales</taxon>
        <taxon>Streptococcaceae</taxon>
        <taxon>Streptococcus</taxon>
    </lineage>
</organism>
<evidence type="ECO:0000255" key="1">
    <source>
        <dbReference type="HAMAP-Rule" id="MF_01582"/>
    </source>
</evidence>
<protein>
    <recommendedName>
        <fullName evidence="1">Serine/threonine transporter SstT</fullName>
    </recommendedName>
    <alternativeName>
        <fullName evidence="1">Na(+)/serine-threonine symporter</fullName>
    </alternativeName>
</protein>
<gene>
    <name evidence="1" type="primary">sstT</name>
    <name type="ordered locus">MGAS9429_Spy0274</name>
</gene>